<keyword id="KW-0028">Amino-acid biosynthesis</keyword>
<keyword id="KW-0963">Cytoplasm</keyword>
<keyword id="KW-0220">Diaminopimelate biosynthesis</keyword>
<keyword id="KW-0456">Lyase</keyword>
<keyword id="KW-0457">Lysine biosynthesis</keyword>
<keyword id="KW-0704">Schiff base</keyword>
<gene>
    <name evidence="1" type="primary">dapA</name>
    <name type="ordered locus">BruAb1_0663</name>
</gene>
<sequence length="293" mass="31612">MLKGSITALVTPFDREGAFDEKAFRAFVNWQIEEGTKGLVPVGTTGETPTLSHDEHKRVIEVCIEVAAGRVPVIAGAGSNNTVEAIELAQHAEKAGADAVLVVTPYYNKPNQRGLYEHFSRVARSISIPLVIYNIPGRSIIDMTPETMGALVRDCKNIVGVKDATGKIERVSEQRAICGKEFIQLSGEDATALGFNAHGGVGCISVTSNIAPRLCAEFQEACQAGNFAKALELQDRLMPLHKALFLEPNPSGPKYALSRLGRIENVLRSPMVTIEAATAEKIDHAMKHAVLIN</sequence>
<proteinExistence type="inferred from homology"/>
<protein>
    <recommendedName>
        <fullName evidence="1">4-hydroxy-tetrahydrodipicolinate synthase</fullName>
        <shortName evidence="1">HTPA synthase</shortName>
        <ecNumber evidence="1">4.3.3.7</ecNumber>
    </recommendedName>
</protein>
<accession>Q57E96</accession>
<evidence type="ECO:0000255" key="1">
    <source>
        <dbReference type="HAMAP-Rule" id="MF_00418"/>
    </source>
</evidence>
<evidence type="ECO:0000305" key="2"/>
<organism>
    <name type="scientific">Brucella abortus biovar 1 (strain 9-941)</name>
    <dbReference type="NCBI Taxonomy" id="262698"/>
    <lineage>
        <taxon>Bacteria</taxon>
        <taxon>Pseudomonadati</taxon>
        <taxon>Pseudomonadota</taxon>
        <taxon>Alphaproteobacteria</taxon>
        <taxon>Hyphomicrobiales</taxon>
        <taxon>Brucellaceae</taxon>
        <taxon>Brucella/Ochrobactrum group</taxon>
        <taxon>Brucella</taxon>
    </lineage>
</organism>
<name>DAPA_BRUAB</name>
<dbReference type="EC" id="4.3.3.7" evidence="1"/>
<dbReference type="EMBL" id="AE017223">
    <property type="protein sequence ID" value="AAX74038.1"/>
    <property type="molecule type" value="Genomic_DNA"/>
</dbReference>
<dbReference type="RefSeq" id="WP_002963790.1">
    <property type="nucleotide sequence ID" value="NC_006932.1"/>
</dbReference>
<dbReference type="SMR" id="Q57E96"/>
<dbReference type="EnsemblBacteria" id="AAX74038">
    <property type="protein sequence ID" value="AAX74038"/>
    <property type="gene ID" value="BruAb1_0663"/>
</dbReference>
<dbReference type="GeneID" id="93016947"/>
<dbReference type="KEGG" id="bmb:BruAb1_0663"/>
<dbReference type="HOGENOM" id="CLU_049343_7_1_5"/>
<dbReference type="UniPathway" id="UPA00034">
    <property type="reaction ID" value="UER00017"/>
</dbReference>
<dbReference type="Proteomes" id="UP000000540">
    <property type="component" value="Chromosome I"/>
</dbReference>
<dbReference type="GO" id="GO:0005829">
    <property type="term" value="C:cytosol"/>
    <property type="evidence" value="ECO:0007669"/>
    <property type="project" value="TreeGrafter"/>
</dbReference>
<dbReference type="GO" id="GO:0008840">
    <property type="term" value="F:4-hydroxy-tetrahydrodipicolinate synthase activity"/>
    <property type="evidence" value="ECO:0007669"/>
    <property type="project" value="UniProtKB-UniRule"/>
</dbReference>
<dbReference type="GO" id="GO:0019877">
    <property type="term" value="P:diaminopimelate biosynthetic process"/>
    <property type="evidence" value="ECO:0007669"/>
    <property type="project" value="UniProtKB-UniRule"/>
</dbReference>
<dbReference type="GO" id="GO:0009089">
    <property type="term" value="P:lysine biosynthetic process via diaminopimelate"/>
    <property type="evidence" value="ECO:0007669"/>
    <property type="project" value="UniProtKB-UniRule"/>
</dbReference>
<dbReference type="CDD" id="cd00950">
    <property type="entry name" value="DHDPS"/>
    <property type="match status" value="1"/>
</dbReference>
<dbReference type="Gene3D" id="3.20.20.70">
    <property type="entry name" value="Aldolase class I"/>
    <property type="match status" value="1"/>
</dbReference>
<dbReference type="HAMAP" id="MF_00418">
    <property type="entry name" value="DapA"/>
    <property type="match status" value="1"/>
</dbReference>
<dbReference type="InterPro" id="IPR013785">
    <property type="entry name" value="Aldolase_TIM"/>
</dbReference>
<dbReference type="InterPro" id="IPR005263">
    <property type="entry name" value="DapA"/>
</dbReference>
<dbReference type="InterPro" id="IPR002220">
    <property type="entry name" value="DapA-like"/>
</dbReference>
<dbReference type="InterPro" id="IPR020625">
    <property type="entry name" value="Schiff_base-form_aldolases_AS"/>
</dbReference>
<dbReference type="NCBIfam" id="TIGR00674">
    <property type="entry name" value="dapA"/>
    <property type="match status" value="1"/>
</dbReference>
<dbReference type="PANTHER" id="PTHR12128:SF66">
    <property type="entry name" value="4-HYDROXY-2-OXOGLUTARATE ALDOLASE, MITOCHONDRIAL"/>
    <property type="match status" value="1"/>
</dbReference>
<dbReference type="PANTHER" id="PTHR12128">
    <property type="entry name" value="DIHYDRODIPICOLINATE SYNTHASE"/>
    <property type="match status" value="1"/>
</dbReference>
<dbReference type="Pfam" id="PF00701">
    <property type="entry name" value="DHDPS"/>
    <property type="match status" value="1"/>
</dbReference>
<dbReference type="PIRSF" id="PIRSF001365">
    <property type="entry name" value="DHDPS"/>
    <property type="match status" value="1"/>
</dbReference>
<dbReference type="PRINTS" id="PR00146">
    <property type="entry name" value="DHPICSNTHASE"/>
</dbReference>
<dbReference type="SMART" id="SM01130">
    <property type="entry name" value="DHDPS"/>
    <property type="match status" value="1"/>
</dbReference>
<dbReference type="SUPFAM" id="SSF51569">
    <property type="entry name" value="Aldolase"/>
    <property type="match status" value="1"/>
</dbReference>
<dbReference type="PROSITE" id="PS00666">
    <property type="entry name" value="DHDPS_2"/>
    <property type="match status" value="1"/>
</dbReference>
<reference key="1">
    <citation type="journal article" date="2005" name="J. Bacteriol.">
        <title>Completion of the genome sequence of Brucella abortus and comparison to the highly similar genomes of Brucella melitensis and Brucella suis.</title>
        <authorList>
            <person name="Halling S.M."/>
            <person name="Peterson-Burch B.D."/>
            <person name="Bricker B.J."/>
            <person name="Zuerner R.L."/>
            <person name="Qing Z."/>
            <person name="Li L.-L."/>
            <person name="Kapur V."/>
            <person name="Alt D.P."/>
            <person name="Olsen S.C."/>
        </authorList>
    </citation>
    <scope>NUCLEOTIDE SEQUENCE [LARGE SCALE GENOMIC DNA]</scope>
    <source>
        <strain>9-941</strain>
    </source>
</reference>
<comment type="function">
    <text evidence="1">Catalyzes the condensation of (S)-aspartate-beta-semialdehyde [(S)-ASA] and pyruvate to 4-hydroxy-tetrahydrodipicolinate (HTPA).</text>
</comment>
<comment type="catalytic activity">
    <reaction evidence="1">
        <text>L-aspartate 4-semialdehyde + pyruvate = (2S,4S)-4-hydroxy-2,3,4,5-tetrahydrodipicolinate + H2O + H(+)</text>
        <dbReference type="Rhea" id="RHEA:34171"/>
        <dbReference type="ChEBI" id="CHEBI:15361"/>
        <dbReference type="ChEBI" id="CHEBI:15377"/>
        <dbReference type="ChEBI" id="CHEBI:15378"/>
        <dbReference type="ChEBI" id="CHEBI:67139"/>
        <dbReference type="ChEBI" id="CHEBI:537519"/>
        <dbReference type="EC" id="4.3.3.7"/>
    </reaction>
</comment>
<comment type="pathway">
    <text evidence="1">Amino-acid biosynthesis; L-lysine biosynthesis via DAP pathway; (S)-tetrahydrodipicolinate from L-aspartate: step 3/4.</text>
</comment>
<comment type="subunit">
    <text evidence="1">Homotetramer; dimer of dimers.</text>
</comment>
<comment type="subcellular location">
    <subcellularLocation>
        <location evidence="1">Cytoplasm</location>
    </subcellularLocation>
</comment>
<comment type="similarity">
    <text evidence="1">Belongs to the DapA family.</text>
</comment>
<comment type="caution">
    <text evidence="2">Was originally thought to be a dihydrodipicolinate synthase (DHDPS), catalyzing the condensation of (S)-aspartate-beta-semialdehyde [(S)-ASA] and pyruvate to dihydrodipicolinate (DHDP). However, it was shown in E.coli that the product of the enzymatic reaction is not dihydrodipicolinate but in fact (4S)-4-hydroxy-2,3,4,5-tetrahydro-(2S)-dipicolinic acid (HTPA), and that the consecutive dehydration reaction leading to DHDP is not spontaneous but catalyzed by DapB.</text>
</comment>
<feature type="chain" id="PRO_0000103087" description="4-hydroxy-tetrahydrodipicolinate synthase">
    <location>
        <begin position="1"/>
        <end position="293"/>
    </location>
</feature>
<feature type="active site" description="Proton donor/acceptor" evidence="1">
    <location>
        <position position="133"/>
    </location>
</feature>
<feature type="active site" description="Schiff-base intermediate with substrate" evidence="1">
    <location>
        <position position="162"/>
    </location>
</feature>
<feature type="binding site" evidence="1">
    <location>
        <position position="45"/>
    </location>
    <ligand>
        <name>pyruvate</name>
        <dbReference type="ChEBI" id="CHEBI:15361"/>
    </ligand>
</feature>
<feature type="binding site" evidence="1">
    <location>
        <position position="204"/>
    </location>
    <ligand>
        <name>pyruvate</name>
        <dbReference type="ChEBI" id="CHEBI:15361"/>
    </ligand>
</feature>
<feature type="site" description="Part of a proton relay during catalysis" evidence="1">
    <location>
        <position position="44"/>
    </location>
</feature>
<feature type="site" description="Part of a proton relay during catalysis" evidence="1">
    <location>
        <position position="107"/>
    </location>
</feature>